<gene>
    <name evidence="1" type="primary">ndhB1</name>
</gene>
<dbReference type="EC" id="7.1.1.-" evidence="1"/>
<dbReference type="EMBL" id="EU117376">
    <property type="protein sequence ID" value="ABV66198.1"/>
    <property type="molecule type" value="Genomic_DNA"/>
</dbReference>
<dbReference type="SMR" id="P0CC90"/>
<dbReference type="KEGG" id="mesc:6000013"/>
<dbReference type="KEGG" id="mesc:6000058"/>
<dbReference type="OrthoDB" id="1621789at2759"/>
<dbReference type="GO" id="GO:0009535">
    <property type="term" value="C:chloroplast thylakoid membrane"/>
    <property type="evidence" value="ECO:0007669"/>
    <property type="project" value="UniProtKB-SubCell"/>
</dbReference>
<dbReference type="GO" id="GO:0008137">
    <property type="term" value="F:NADH dehydrogenase (ubiquinone) activity"/>
    <property type="evidence" value="ECO:0007669"/>
    <property type="project" value="InterPro"/>
</dbReference>
<dbReference type="GO" id="GO:0048038">
    <property type="term" value="F:quinone binding"/>
    <property type="evidence" value="ECO:0007669"/>
    <property type="project" value="UniProtKB-KW"/>
</dbReference>
<dbReference type="GO" id="GO:0042773">
    <property type="term" value="P:ATP synthesis coupled electron transport"/>
    <property type="evidence" value="ECO:0007669"/>
    <property type="project" value="InterPro"/>
</dbReference>
<dbReference type="GO" id="GO:0019684">
    <property type="term" value="P:photosynthesis, light reaction"/>
    <property type="evidence" value="ECO:0007669"/>
    <property type="project" value="UniProtKB-UniRule"/>
</dbReference>
<dbReference type="HAMAP" id="MF_00445">
    <property type="entry name" value="NDH1_NuoN_1"/>
    <property type="match status" value="1"/>
</dbReference>
<dbReference type="InterPro" id="IPR010096">
    <property type="entry name" value="NADH-Q_OxRdtase_suN/2"/>
</dbReference>
<dbReference type="InterPro" id="IPR001750">
    <property type="entry name" value="ND/Mrp_TM"/>
</dbReference>
<dbReference type="InterPro" id="IPR045693">
    <property type="entry name" value="Ndh2_N"/>
</dbReference>
<dbReference type="NCBIfam" id="TIGR01770">
    <property type="entry name" value="NDH_I_N"/>
    <property type="match status" value="1"/>
</dbReference>
<dbReference type="NCBIfam" id="NF002701">
    <property type="entry name" value="PRK02504.1"/>
    <property type="match status" value="1"/>
</dbReference>
<dbReference type="PANTHER" id="PTHR22773">
    <property type="entry name" value="NADH DEHYDROGENASE"/>
    <property type="match status" value="1"/>
</dbReference>
<dbReference type="Pfam" id="PF19530">
    <property type="entry name" value="Ndh2_N"/>
    <property type="match status" value="1"/>
</dbReference>
<dbReference type="Pfam" id="PF00361">
    <property type="entry name" value="Proton_antipo_M"/>
    <property type="match status" value="1"/>
</dbReference>
<proteinExistence type="inferred from homology"/>
<sequence length="510" mass="56639">MIWHVQNENFILDSTRIFMKAFHLLLFDGSFIFPECILIFGLILLLMIDSTSDQKDIPWLYFISSTSLVMSITALLFRWREEPMISFSGNFQTNNFNEIFQFLILLCSTLCIPLSVEYIECTEMAITEFLLFVLTATLGGMFLCGANDLITIFVAPECFSLCSYLLSGYTKKDVRSNEATTKYLLMGGASSSILVHAFSWLYGSSGGEIELQEIVNGLINTQMYNSPGISIALIFITVGIGFKLSLAPSHQWTPDVYEGSPTPVVAFLSVTSKVAASASATRIFDIPFYFSSNEWHLLLEILAILSMIVGNLIAITQTSMKRMLAYSSIGQIGYVIIGIIVGDSNGGYASMITYMLFYISMNLGTFACIVLFGLRTGTDNIRDYAGLYTKDPFLALSLALCLLSLGGLPPLAGFFGKLHLFWCGWQAGLYFLVLIGLLTSVVSIYYYLKIIKLLMTGRNQEITPHVRNYRRSPLRSNNSIELSMIVCVIASTIPGISMNPIVEIAQDTLF</sequence>
<comment type="function">
    <text evidence="1">NDH shuttles electrons from NAD(P)H:plastoquinone, via FMN and iron-sulfur (Fe-S) centers, to quinones in the photosynthetic chain and possibly in a chloroplast respiratory chain. The immediate electron acceptor for the enzyme in this species is believed to be plastoquinone. Couples the redox reaction to proton translocation, and thus conserves the redox energy in a proton gradient.</text>
</comment>
<comment type="catalytic activity">
    <reaction evidence="1">
        <text>a plastoquinone + NADH + (n+1) H(+)(in) = a plastoquinol + NAD(+) + n H(+)(out)</text>
        <dbReference type="Rhea" id="RHEA:42608"/>
        <dbReference type="Rhea" id="RHEA-COMP:9561"/>
        <dbReference type="Rhea" id="RHEA-COMP:9562"/>
        <dbReference type="ChEBI" id="CHEBI:15378"/>
        <dbReference type="ChEBI" id="CHEBI:17757"/>
        <dbReference type="ChEBI" id="CHEBI:57540"/>
        <dbReference type="ChEBI" id="CHEBI:57945"/>
        <dbReference type="ChEBI" id="CHEBI:62192"/>
    </reaction>
</comment>
<comment type="catalytic activity">
    <reaction evidence="1">
        <text>a plastoquinone + NADPH + (n+1) H(+)(in) = a plastoquinol + NADP(+) + n H(+)(out)</text>
        <dbReference type="Rhea" id="RHEA:42612"/>
        <dbReference type="Rhea" id="RHEA-COMP:9561"/>
        <dbReference type="Rhea" id="RHEA-COMP:9562"/>
        <dbReference type="ChEBI" id="CHEBI:15378"/>
        <dbReference type="ChEBI" id="CHEBI:17757"/>
        <dbReference type="ChEBI" id="CHEBI:57783"/>
        <dbReference type="ChEBI" id="CHEBI:58349"/>
        <dbReference type="ChEBI" id="CHEBI:62192"/>
    </reaction>
</comment>
<comment type="subunit">
    <text evidence="1">NDH is composed of at least 16 different subunits, 5 of which are encoded in the nucleus.</text>
</comment>
<comment type="subcellular location">
    <subcellularLocation>
        <location evidence="1">Plastid</location>
        <location evidence="1">Chloroplast thylakoid membrane</location>
        <topology evidence="1">Multi-pass membrane protein</topology>
    </subcellularLocation>
</comment>
<comment type="similarity">
    <text evidence="1">Belongs to the complex I subunit 2 family.</text>
</comment>
<evidence type="ECO:0000255" key="1">
    <source>
        <dbReference type="HAMAP-Rule" id="MF_00445"/>
    </source>
</evidence>
<keyword id="KW-0150">Chloroplast</keyword>
<keyword id="KW-0472">Membrane</keyword>
<keyword id="KW-0520">NAD</keyword>
<keyword id="KW-0521">NADP</keyword>
<keyword id="KW-0934">Plastid</keyword>
<keyword id="KW-0618">Plastoquinone</keyword>
<keyword id="KW-0874">Quinone</keyword>
<keyword id="KW-0793">Thylakoid</keyword>
<keyword id="KW-1278">Translocase</keyword>
<keyword id="KW-0812">Transmembrane</keyword>
<keyword id="KW-1133">Transmembrane helix</keyword>
<keyword id="KW-0813">Transport</keyword>
<geneLocation type="chloroplast"/>
<accession>P0CC90</accession>
<accession>B1NWJ4</accession>
<feature type="chain" id="PRO_0000344272" description="NAD(P)H-quinone oxidoreductase subunit 2 A, chloroplastic">
    <location>
        <begin position="1"/>
        <end position="510"/>
    </location>
</feature>
<feature type="transmembrane region" description="Helical" evidence="1">
    <location>
        <begin position="24"/>
        <end position="44"/>
    </location>
</feature>
<feature type="transmembrane region" description="Helical" evidence="1">
    <location>
        <begin position="57"/>
        <end position="77"/>
    </location>
</feature>
<feature type="transmembrane region" description="Helical" evidence="1">
    <location>
        <begin position="99"/>
        <end position="119"/>
    </location>
</feature>
<feature type="transmembrane region" description="Helical" evidence="1">
    <location>
        <begin position="124"/>
        <end position="144"/>
    </location>
</feature>
<feature type="transmembrane region" description="Helical" evidence="1">
    <location>
        <begin position="149"/>
        <end position="169"/>
    </location>
</feature>
<feature type="transmembrane region" description="Helical" evidence="1">
    <location>
        <begin position="183"/>
        <end position="203"/>
    </location>
</feature>
<feature type="transmembrane region" description="Helical" evidence="1">
    <location>
        <begin position="227"/>
        <end position="247"/>
    </location>
</feature>
<feature type="transmembrane region" description="Helical" evidence="1">
    <location>
        <begin position="295"/>
        <end position="315"/>
    </location>
</feature>
<feature type="transmembrane region" description="Helical" evidence="1">
    <location>
        <begin position="323"/>
        <end position="343"/>
    </location>
</feature>
<feature type="transmembrane region" description="Helical" evidence="1">
    <location>
        <begin position="354"/>
        <end position="374"/>
    </location>
</feature>
<feature type="transmembrane region" description="Helical" evidence="1">
    <location>
        <begin position="395"/>
        <end position="415"/>
    </location>
</feature>
<feature type="transmembrane region" description="Helical" evidence="1">
    <location>
        <begin position="418"/>
        <end position="438"/>
    </location>
</feature>
<feature type="transmembrane region" description="Helical" evidence="1">
    <location>
        <begin position="482"/>
        <end position="502"/>
    </location>
</feature>
<protein>
    <recommendedName>
        <fullName evidence="1">NAD(P)H-quinone oxidoreductase subunit 2 A, chloroplastic</fullName>
        <ecNumber evidence="1">7.1.1.-</ecNumber>
    </recommendedName>
    <alternativeName>
        <fullName evidence="1">NAD(P)H dehydrogenase, subunit 2 A</fullName>
    </alternativeName>
    <alternativeName>
        <fullName evidence="1">NADH-plastoquinone oxidoreductase subunit 2 A</fullName>
    </alternativeName>
</protein>
<reference key="1">
    <citation type="journal article" date="2008" name="Theor. Appl. Genet.">
        <title>The complete nucleotide sequence of the cassava (Manihot esculenta) chloroplast genome and the evolution of atpF in Malpighiales: RNA editing and multiple losses of a group II intron.</title>
        <authorList>
            <person name="Daniell H."/>
            <person name="Wurdack K.J."/>
            <person name="Kanagaraj A."/>
            <person name="Lee S.-B."/>
            <person name="Saski C."/>
            <person name="Jansen R.K."/>
        </authorList>
    </citation>
    <scope>NUCLEOTIDE SEQUENCE [LARGE SCALE GENOMIC DNA]</scope>
    <source>
        <strain>cv. TME3</strain>
    </source>
</reference>
<organism>
    <name type="scientific">Manihot esculenta</name>
    <name type="common">Cassava</name>
    <name type="synonym">Jatropha manihot</name>
    <dbReference type="NCBI Taxonomy" id="3983"/>
    <lineage>
        <taxon>Eukaryota</taxon>
        <taxon>Viridiplantae</taxon>
        <taxon>Streptophyta</taxon>
        <taxon>Embryophyta</taxon>
        <taxon>Tracheophyta</taxon>
        <taxon>Spermatophyta</taxon>
        <taxon>Magnoliopsida</taxon>
        <taxon>eudicotyledons</taxon>
        <taxon>Gunneridae</taxon>
        <taxon>Pentapetalae</taxon>
        <taxon>rosids</taxon>
        <taxon>fabids</taxon>
        <taxon>Malpighiales</taxon>
        <taxon>Euphorbiaceae</taxon>
        <taxon>Crotonoideae</taxon>
        <taxon>Manihoteae</taxon>
        <taxon>Manihot</taxon>
    </lineage>
</organism>
<name>NU2C1_MANES</name>